<feature type="chain" id="PRO_0000120086" description="Thioredoxin">
    <location>
        <begin position="1"/>
        <end position="107"/>
    </location>
</feature>
<feature type="domain" description="Thioredoxin" evidence="1">
    <location>
        <begin position="2"/>
        <end position="107"/>
    </location>
</feature>
<feature type="disulfide bond" description="Redox-active" evidence="1">
    <location>
        <begin position="32"/>
        <end position="35"/>
    </location>
</feature>
<feature type="unsure residue" description="I or L">
    <location>
        <position position="17"/>
    </location>
</feature>
<feature type="unsure residue" description="I or L">
    <location>
        <position position="38"/>
    </location>
</feature>
<feature type="unsure residue" description="I or L">
    <location>
        <position position="42"/>
    </location>
</feature>
<feature type="unsure residue" description="I or L">
    <location>
        <position position="55"/>
    </location>
</feature>
<feature type="unsure residue" description="I or L">
    <location>
        <position position="58"/>
    </location>
</feature>
<feature type="unsure residue" description="I or L">
    <location>
        <position position="60"/>
    </location>
</feature>
<feature type="unsure residue" description="I or L">
    <location>
        <position position="72"/>
    </location>
</feature>
<feature type="unsure residue" description="I or L">
    <location>
        <position position="107"/>
    </location>
</feature>
<accession>P09857</accession>
<name>THIO_ALLVI</name>
<protein>
    <recommendedName>
        <fullName>Thioredoxin</fullName>
        <shortName>Trx</shortName>
    </recommendedName>
</protein>
<comment type="function">
    <text>Participates in various redox reactions through the reversible oxidation of its active center dithiol to a disulfide and catalyzes dithiol-disulfide exchange reactions.</text>
</comment>
<comment type="similarity">
    <text evidence="2">Belongs to the thioredoxin family.</text>
</comment>
<sequence length="107" mass="11737">SDSIVHVTDDSFEEEVXKSPDPVLVDYWADWCGPCKMXAPVXDEIADEYAGRVKXAKXNXDENPNTPPRYGXRGIPTLMLFRGGEVEATKVGAVSKSQLTAFLDSNX</sequence>
<evidence type="ECO:0000255" key="1">
    <source>
        <dbReference type="PROSITE-ProRule" id="PRU00691"/>
    </source>
</evidence>
<evidence type="ECO:0000305" key="2"/>
<keyword id="KW-0903">Direct protein sequencing</keyword>
<keyword id="KW-1015">Disulfide bond</keyword>
<keyword id="KW-0249">Electron transport</keyword>
<keyword id="KW-0676">Redox-active center</keyword>
<keyword id="KW-0813">Transport</keyword>
<proteinExistence type="evidence at protein level"/>
<dbReference type="PIR" id="A26622">
    <property type="entry name" value="A26622"/>
</dbReference>
<dbReference type="GO" id="GO:0005829">
    <property type="term" value="C:cytosol"/>
    <property type="evidence" value="ECO:0007669"/>
    <property type="project" value="TreeGrafter"/>
</dbReference>
<dbReference type="GO" id="GO:0015035">
    <property type="term" value="F:protein-disulfide reductase activity"/>
    <property type="evidence" value="ECO:0007669"/>
    <property type="project" value="InterPro"/>
</dbReference>
<dbReference type="GO" id="GO:0045454">
    <property type="term" value="P:cell redox homeostasis"/>
    <property type="evidence" value="ECO:0007669"/>
    <property type="project" value="TreeGrafter"/>
</dbReference>
<dbReference type="CDD" id="cd02947">
    <property type="entry name" value="TRX_family"/>
    <property type="match status" value="1"/>
</dbReference>
<dbReference type="FunFam" id="3.40.30.10:FF:000001">
    <property type="entry name" value="Thioredoxin"/>
    <property type="match status" value="1"/>
</dbReference>
<dbReference type="Gene3D" id="3.40.30.10">
    <property type="entry name" value="Glutaredoxin"/>
    <property type="match status" value="1"/>
</dbReference>
<dbReference type="InterPro" id="IPR005746">
    <property type="entry name" value="Thioredoxin"/>
</dbReference>
<dbReference type="InterPro" id="IPR036249">
    <property type="entry name" value="Thioredoxin-like_sf"/>
</dbReference>
<dbReference type="InterPro" id="IPR013766">
    <property type="entry name" value="Thioredoxin_domain"/>
</dbReference>
<dbReference type="NCBIfam" id="NF006898">
    <property type="entry name" value="PRK09381.1"/>
    <property type="match status" value="1"/>
</dbReference>
<dbReference type="NCBIfam" id="TIGR01068">
    <property type="entry name" value="thioredoxin"/>
    <property type="match status" value="1"/>
</dbReference>
<dbReference type="PANTHER" id="PTHR45663">
    <property type="entry name" value="GEO12009P1"/>
    <property type="match status" value="1"/>
</dbReference>
<dbReference type="PANTHER" id="PTHR45663:SF11">
    <property type="entry name" value="GEO12009P1"/>
    <property type="match status" value="1"/>
</dbReference>
<dbReference type="Pfam" id="PF00085">
    <property type="entry name" value="Thioredoxin"/>
    <property type="match status" value="1"/>
</dbReference>
<dbReference type="PIRSF" id="PIRSF000077">
    <property type="entry name" value="Thioredoxin"/>
    <property type="match status" value="1"/>
</dbReference>
<dbReference type="PRINTS" id="PR00421">
    <property type="entry name" value="THIOREDOXIN"/>
</dbReference>
<dbReference type="SUPFAM" id="SSF52833">
    <property type="entry name" value="Thioredoxin-like"/>
    <property type="match status" value="1"/>
</dbReference>
<dbReference type="PROSITE" id="PS00194">
    <property type="entry name" value="THIOREDOXIN_1"/>
    <property type="match status" value="1"/>
</dbReference>
<dbReference type="PROSITE" id="PS51352">
    <property type="entry name" value="THIOREDOXIN_2"/>
    <property type="match status" value="1"/>
</dbReference>
<reference key="1">
    <citation type="journal article" date="1987" name="Biochemistry">
        <title>The primary structure of thioredoxin from Chromatium vinosum determined by high-performance tandem mass spectrometry.</title>
        <authorList>
            <person name="Johnson R.S."/>
            <person name="Biemann K."/>
        </authorList>
    </citation>
    <scope>PROTEIN SEQUENCE</scope>
    <scope>IDENTIFICATION BY MASS SPECTROMETRY</scope>
</reference>
<organism>
    <name type="scientific">Allochromatium vinosum</name>
    <name type="common">Chromatium vinosum</name>
    <dbReference type="NCBI Taxonomy" id="1049"/>
    <lineage>
        <taxon>Bacteria</taxon>
        <taxon>Pseudomonadati</taxon>
        <taxon>Pseudomonadota</taxon>
        <taxon>Gammaproteobacteria</taxon>
        <taxon>Chromatiales</taxon>
        <taxon>Chromatiaceae</taxon>
        <taxon>Allochromatium</taxon>
    </lineage>
</organism>
<gene>
    <name type="primary">trxA</name>
</gene>